<name>OPT6_ARATH</name>
<proteinExistence type="evidence at transcript level"/>
<gene>
    <name type="primary">OPT6</name>
    <name type="ordered locus">At4g27730</name>
    <name type="ORF">T29A15.220</name>
</gene>
<comment type="function">
    <text evidence="2 3">Involved in the translocation of tetra- and pentapeptides across the cellular membrane in an energy-dependent manner. Also involved in transport of glutathione derivatives and metal complexes, and may be involved in stress resistance.</text>
</comment>
<comment type="subcellular location">
    <subcellularLocation>
        <location evidence="4">Membrane</location>
        <topology evidence="4">Multi-pass membrane protein</topology>
    </subcellularLocation>
</comment>
<comment type="tissue specificity">
    <text evidence="2 3">Expressed in flowers and roots, and at a low level in leaves and stems. Detected in the cambial zone of the vascular bundles and in the region of lateral root initiation. Low expression in the vascular network of the petals and high in the stamen filaments and the gynoecium.</text>
</comment>
<comment type="developmental stage">
    <text evidence="3">In young embryos, transient expression in the procambium and, at later stage, expression over the whole surface of the embryo and in the inner tegument, in the area adjacent to the micropyle.</text>
</comment>
<comment type="induction">
    <text evidence="3">Induced by primisulfuron and abscisic acid, and weakly by 2,4-dichlorophenoxyacetic acid (2,4-D). Not induced by salicylic acid, hydrogen peroxide, reduced and oxidized glutathione or cadmium.</text>
</comment>
<comment type="similarity">
    <text evidence="4">Belongs to the oligopeptide OPT transporter (TC 2.A.67.1) family.</text>
</comment>
<keyword id="KW-0472">Membrane</keyword>
<keyword id="KW-0571">Peptide transport</keyword>
<keyword id="KW-0653">Protein transport</keyword>
<keyword id="KW-1185">Reference proteome</keyword>
<keyword id="KW-0812">Transmembrane</keyword>
<keyword id="KW-1133">Transmembrane helix</keyword>
<keyword id="KW-0813">Transport</keyword>
<feature type="chain" id="PRO_0000213783" description="Oligopeptide transporter 6">
    <location>
        <begin position="1"/>
        <end position="736"/>
    </location>
</feature>
<feature type="transmembrane region" description="Helical" evidence="1">
    <location>
        <begin position="43"/>
        <end position="63"/>
    </location>
</feature>
<feature type="transmembrane region" description="Helical" evidence="1">
    <location>
        <begin position="66"/>
        <end position="86"/>
    </location>
</feature>
<feature type="transmembrane region" description="Helical" evidence="1">
    <location>
        <begin position="116"/>
        <end position="136"/>
    </location>
</feature>
<feature type="transmembrane region" description="Helical" evidence="1">
    <location>
        <begin position="148"/>
        <end position="168"/>
    </location>
</feature>
<feature type="transmembrane region" description="Helical" evidence="1">
    <location>
        <begin position="210"/>
        <end position="230"/>
    </location>
</feature>
<feature type="transmembrane region" description="Helical" evidence="1">
    <location>
        <begin position="258"/>
        <end position="278"/>
    </location>
</feature>
<feature type="transmembrane region" description="Helical" evidence="1">
    <location>
        <begin position="288"/>
        <end position="308"/>
    </location>
</feature>
<feature type="transmembrane region" description="Helical" evidence="1">
    <location>
        <begin position="357"/>
        <end position="377"/>
    </location>
</feature>
<feature type="transmembrane region" description="Helical" evidence="1">
    <location>
        <begin position="412"/>
        <end position="432"/>
    </location>
</feature>
<feature type="transmembrane region" description="Helical" evidence="1">
    <location>
        <begin position="443"/>
        <end position="463"/>
    </location>
</feature>
<feature type="transmembrane region" description="Helical" evidence="1">
    <location>
        <begin position="489"/>
        <end position="511"/>
    </location>
</feature>
<feature type="transmembrane region" description="Helical" evidence="1">
    <location>
        <begin position="527"/>
        <end position="547"/>
    </location>
</feature>
<feature type="transmembrane region" description="Helical" evidence="1">
    <location>
        <begin position="602"/>
        <end position="622"/>
    </location>
</feature>
<feature type="transmembrane region" description="Helical" evidence="1">
    <location>
        <begin position="645"/>
        <end position="665"/>
    </location>
</feature>
<feature type="transmembrane region" description="Helical" evidence="1">
    <location>
        <begin position="678"/>
        <end position="698"/>
    </location>
</feature>
<organism>
    <name type="scientific">Arabidopsis thaliana</name>
    <name type="common">Mouse-ear cress</name>
    <dbReference type="NCBI Taxonomy" id="3702"/>
    <lineage>
        <taxon>Eukaryota</taxon>
        <taxon>Viridiplantae</taxon>
        <taxon>Streptophyta</taxon>
        <taxon>Embryophyta</taxon>
        <taxon>Tracheophyta</taxon>
        <taxon>Spermatophyta</taxon>
        <taxon>Magnoliopsida</taxon>
        <taxon>eudicotyledons</taxon>
        <taxon>Gunneridae</taxon>
        <taxon>Pentapetalae</taxon>
        <taxon>rosids</taxon>
        <taxon>malvids</taxon>
        <taxon>Brassicales</taxon>
        <taxon>Brassicaceae</taxon>
        <taxon>Camelineae</taxon>
        <taxon>Arabidopsis</taxon>
    </lineage>
</organism>
<dbReference type="EMBL" id="AL035602">
    <property type="protein sequence ID" value="CAB38285.1"/>
    <property type="molecule type" value="Genomic_DNA"/>
</dbReference>
<dbReference type="EMBL" id="AL161571">
    <property type="protein sequence ID" value="CAB81423.1"/>
    <property type="molecule type" value="Genomic_DNA"/>
</dbReference>
<dbReference type="EMBL" id="CP002687">
    <property type="protein sequence ID" value="AEE85386.1"/>
    <property type="molecule type" value="Genomic_DNA"/>
</dbReference>
<dbReference type="EMBL" id="AY142525">
    <property type="protein sequence ID" value="AAN13068.1"/>
    <property type="molecule type" value="mRNA"/>
</dbReference>
<dbReference type="PIR" id="T05878">
    <property type="entry name" value="T05878"/>
</dbReference>
<dbReference type="RefSeq" id="NP_194503.1">
    <property type="nucleotide sequence ID" value="NM_118912.6"/>
</dbReference>
<dbReference type="FunCoup" id="Q9T095">
    <property type="interactions" value="139"/>
</dbReference>
<dbReference type="STRING" id="3702.Q9T095"/>
<dbReference type="PaxDb" id="3702-AT4G27730.1"/>
<dbReference type="ProteomicsDB" id="248820"/>
<dbReference type="EnsemblPlants" id="AT4G27730.1">
    <property type="protein sequence ID" value="AT4G27730.1"/>
    <property type="gene ID" value="AT4G27730"/>
</dbReference>
<dbReference type="GeneID" id="828887"/>
<dbReference type="Gramene" id="AT4G27730.1">
    <property type="protein sequence ID" value="AT4G27730.1"/>
    <property type="gene ID" value="AT4G27730"/>
</dbReference>
<dbReference type="KEGG" id="ath:AT4G27730"/>
<dbReference type="Araport" id="AT4G27730"/>
<dbReference type="TAIR" id="AT4G27730">
    <property type="gene designation" value="OPT6"/>
</dbReference>
<dbReference type="eggNOG" id="KOG2262">
    <property type="taxonomic scope" value="Eukaryota"/>
</dbReference>
<dbReference type="HOGENOM" id="CLU_004965_1_1_1"/>
<dbReference type="InParanoid" id="Q9T095"/>
<dbReference type="OMA" id="VISTQMI"/>
<dbReference type="OrthoDB" id="9986677at2759"/>
<dbReference type="PhylomeDB" id="Q9T095"/>
<dbReference type="PRO" id="PR:Q9T095"/>
<dbReference type="Proteomes" id="UP000006548">
    <property type="component" value="Chromosome 4"/>
</dbReference>
<dbReference type="ExpressionAtlas" id="Q9T095">
    <property type="expression patterns" value="baseline and differential"/>
</dbReference>
<dbReference type="GO" id="GO:0016020">
    <property type="term" value="C:membrane"/>
    <property type="evidence" value="ECO:0000250"/>
    <property type="project" value="TAIR"/>
</dbReference>
<dbReference type="GO" id="GO:0035673">
    <property type="term" value="F:oligopeptide transmembrane transporter activity"/>
    <property type="evidence" value="ECO:0007669"/>
    <property type="project" value="InterPro"/>
</dbReference>
<dbReference type="GO" id="GO:0015031">
    <property type="term" value="P:protein transport"/>
    <property type="evidence" value="ECO:0007669"/>
    <property type="project" value="UniProtKB-KW"/>
</dbReference>
<dbReference type="InterPro" id="IPR004648">
    <property type="entry name" value="Oligpept_transpt"/>
</dbReference>
<dbReference type="InterPro" id="IPR004813">
    <property type="entry name" value="OPT"/>
</dbReference>
<dbReference type="NCBIfam" id="TIGR00727">
    <property type="entry name" value="ISP4_OPT"/>
    <property type="match status" value="1"/>
</dbReference>
<dbReference type="NCBIfam" id="TIGR00728">
    <property type="entry name" value="OPT_sfam"/>
    <property type="match status" value="1"/>
</dbReference>
<dbReference type="PANTHER" id="PTHR22601">
    <property type="entry name" value="ISP4 LIKE PROTEIN"/>
    <property type="match status" value="1"/>
</dbReference>
<dbReference type="Pfam" id="PF03169">
    <property type="entry name" value="OPT"/>
    <property type="match status" value="1"/>
</dbReference>
<reference key="1">
    <citation type="journal article" date="1999" name="Nature">
        <title>Sequence and analysis of chromosome 4 of the plant Arabidopsis thaliana.</title>
        <authorList>
            <person name="Mayer K.F.X."/>
            <person name="Schueller C."/>
            <person name="Wambutt R."/>
            <person name="Murphy G."/>
            <person name="Volckaert G."/>
            <person name="Pohl T."/>
            <person name="Duesterhoeft A."/>
            <person name="Stiekema W."/>
            <person name="Entian K.-D."/>
            <person name="Terryn N."/>
            <person name="Harris B."/>
            <person name="Ansorge W."/>
            <person name="Brandt P."/>
            <person name="Grivell L.A."/>
            <person name="Rieger M."/>
            <person name="Weichselgartner M."/>
            <person name="de Simone V."/>
            <person name="Obermaier B."/>
            <person name="Mache R."/>
            <person name="Mueller M."/>
            <person name="Kreis M."/>
            <person name="Delseny M."/>
            <person name="Puigdomenech P."/>
            <person name="Watson M."/>
            <person name="Schmidtheini T."/>
            <person name="Reichert B."/>
            <person name="Portetelle D."/>
            <person name="Perez-Alonso M."/>
            <person name="Boutry M."/>
            <person name="Bancroft I."/>
            <person name="Vos P."/>
            <person name="Hoheisel J."/>
            <person name="Zimmermann W."/>
            <person name="Wedler H."/>
            <person name="Ridley P."/>
            <person name="Langham S.-A."/>
            <person name="McCullagh B."/>
            <person name="Bilham L."/>
            <person name="Robben J."/>
            <person name="van der Schueren J."/>
            <person name="Grymonprez B."/>
            <person name="Chuang Y.-J."/>
            <person name="Vandenbussche F."/>
            <person name="Braeken M."/>
            <person name="Weltjens I."/>
            <person name="Voet M."/>
            <person name="Bastiaens I."/>
            <person name="Aert R."/>
            <person name="Defoor E."/>
            <person name="Weitzenegger T."/>
            <person name="Bothe G."/>
            <person name="Ramsperger U."/>
            <person name="Hilbert H."/>
            <person name="Braun M."/>
            <person name="Holzer E."/>
            <person name="Brandt A."/>
            <person name="Peters S."/>
            <person name="van Staveren M."/>
            <person name="Dirkse W."/>
            <person name="Mooijman P."/>
            <person name="Klein Lankhorst R."/>
            <person name="Rose M."/>
            <person name="Hauf J."/>
            <person name="Koetter P."/>
            <person name="Berneiser S."/>
            <person name="Hempel S."/>
            <person name="Feldpausch M."/>
            <person name="Lamberth S."/>
            <person name="Van den Daele H."/>
            <person name="De Keyser A."/>
            <person name="Buysshaert C."/>
            <person name="Gielen J."/>
            <person name="Villarroel R."/>
            <person name="De Clercq R."/>
            <person name="van Montagu M."/>
            <person name="Rogers J."/>
            <person name="Cronin A."/>
            <person name="Quail M.A."/>
            <person name="Bray-Allen S."/>
            <person name="Clark L."/>
            <person name="Doggett J."/>
            <person name="Hall S."/>
            <person name="Kay M."/>
            <person name="Lennard N."/>
            <person name="McLay K."/>
            <person name="Mayes R."/>
            <person name="Pettett A."/>
            <person name="Rajandream M.A."/>
            <person name="Lyne M."/>
            <person name="Benes V."/>
            <person name="Rechmann S."/>
            <person name="Borkova D."/>
            <person name="Bloecker H."/>
            <person name="Scharfe M."/>
            <person name="Grimm M."/>
            <person name="Loehnert T.-H."/>
            <person name="Dose S."/>
            <person name="de Haan M."/>
            <person name="Maarse A.C."/>
            <person name="Schaefer M."/>
            <person name="Mueller-Auer S."/>
            <person name="Gabel C."/>
            <person name="Fuchs M."/>
            <person name="Fartmann B."/>
            <person name="Granderath K."/>
            <person name="Dauner D."/>
            <person name="Herzl A."/>
            <person name="Neumann S."/>
            <person name="Argiriou A."/>
            <person name="Vitale D."/>
            <person name="Liguori R."/>
            <person name="Piravandi E."/>
            <person name="Massenet O."/>
            <person name="Quigley F."/>
            <person name="Clabauld G."/>
            <person name="Muendlein A."/>
            <person name="Felber R."/>
            <person name="Schnabl S."/>
            <person name="Hiller R."/>
            <person name="Schmidt W."/>
            <person name="Lecharny A."/>
            <person name="Aubourg S."/>
            <person name="Chefdor F."/>
            <person name="Cooke R."/>
            <person name="Berger C."/>
            <person name="Monfort A."/>
            <person name="Casacuberta E."/>
            <person name="Gibbons T."/>
            <person name="Weber N."/>
            <person name="Vandenbol M."/>
            <person name="Bargues M."/>
            <person name="Terol J."/>
            <person name="Torres A."/>
            <person name="Perez-Perez A."/>
            <person name="Purnelle B."/>
            <person name="Bent E."/>
            <person name="Johnson S."/>
            <person name="Tacon D."/>
            <person name="Jesse T."/>
            <person name="Heijnen L."/>
            <person name="Schwarz S."/>
            <person name="Scholler P."/>
            <person name="Heber S."/>
            <person name="Francs P."/>
            <person name="Bielke C."/>
            <person name="Frishman D."/>
            <person name="Haase D."/>
            <person name="Lemcke K."/>
            <person name="Mewes H.-W."/>
            <person name="Stocker S."/>
            <person name="Zaccaria P."/>
            <person name="Bevan M."/>
            <person name="Wilson R.K."/>
            <person name="de la Bastide M."/>
            <person name="Habermann K."/>
            <person name="Parnell L."/>
            <person name="Dedhia N."/>
            <person name="Gnoj L."/>
            <person name="Schutz K."/>
            <person name="Huang E."/>
            <person name="Spiegel L."/>
            <person name="Sekhon M."/>
            <person name="Murray J."/>
            <person name="Sheet P."/>
            <person name="Cordes M."/>
            <person name="Abu-Threideh J."/>
            <person name="Stoneking T."/>
            <person name="Kalicki J."/>
            <person name="Graves T."/>
            <person name="Harmon G."/>
            <person name="Edwards J."/>
            <person name="Latreille P."/>
            <person name="Courtney L."/>
            <person name="Cloud J."/>
            <person name="Abbott A."/>
            <person name="Scott K."/>
            <person name="Johnson D."/>
            <person name="Minx P."/>
            <person name="Bentley D."/>
            <person name="Fulton B."/>
            <person name="Miller N."/>
            <person name="Greco T."/>
            <person name="Kemp K."/>
            <person name="Kramer J."/>
            <person name="Fulton L."/>
            <person name="Mardis E."/>
            <person name="Dante M."/>
            <person name="Pepin K."/>
            <person name="Hillier L.W."/>
            <person name="Nelson J."/>
            <person name="Spieth J."/>
            <person name="Ryan E."/>
            <person name="Andrews S."/>
            <person name="Geisel C."/>
            <person name="Layman D."/>
            <person name="Du H."/>
            <person name="Ali J."/>
            <person name="Berghoff A."/>
            <person name="Jones K."/>
            <person name="Drone K."/>
            <person name="Cotton M."/>
            <person name="Joshu C."/>
            <person name="Antonoiu B."/>
            <person name="Zidanic M."/>
            <person name="Strong C."/>
            <person name="Sun H."/>
            <person name="Lamar B."/>
            <person name="Yordan C."/>
            <person name="Ma P."/>
            <person name="Zhong J."/>
            <person name="Preston R."/>
            <person name="Vil D."/>
            <person name="Shekher M."/>
            <person name="Matero A."/>
            <person name="Shah R."/>
            <person name="Swaby I.K."/>
            <person name="O'Shaughnessy A."/>
            <person name="Rodriguez M."/>
            <person name="Hoffman J."/>
            <person name="Till S."/>
            <person name="Granat S."/>
            <person name="Shohdy N."/>
            <person name="Hasegawa A."/>
            <person name="Hameed A."/>
            <person name="Lodhi M."/>
            <person name="Johnson A."/>
            <person name="Chen E."/>
            <person name="Marra M.A."/>
            <person name="Martienssen R."/>
            <person name="McCombie W.R."/>
        </authorList>
    </citation>
    <scope>NUCLEOTIDE SEQUENCE [LARGE SCALE GENOMIC DNA]</scope>
    <source>
        <strain>cv. Columbia</strain>
    </source>
</reference>
<reference key="2">
    <citation type="journal article" date="2017" name="Plant J.">
        <title>Araport11: a complete reannotation of the Arabidopsis thaliana reference genome.</title>
        <authorList>
            <person name="Cheng C.Y."/>
            <person name="Krishnakumar V."/>
            <person name="Chan A.P."/>
            <person name="Thibaud-Nissen F."/>
            <person name="Schobel S."/>
            <person name="Town C.D."/>
        </authorList>
    </citation>
    <scope>GENOME REANNOTATION</scope>
    <source>
        <strain>cv. Columbia</strain>
    </source>
</reference>
<reference key="3">
    <citation type="journal article" date="2003" name="Science">
        <title>Empirical analysis of transcriptional activity in the Arabidopsis genome.</title>
        <authorList>
            <person name="Yamada K."/>
            <person name="Lim J."/>
            <person name="Dale J.M."/>
            <person name="Chen H."/>
            <person name="Shinn P."/>
            <person name="Palm C.J."/>
            <person name="Southwick A.M."/>
            <person name="Wu H.C."/>
            <person name="Kim C.J."/>
            <person name="Nguyen M."/>
            <person name="Pham P.K."/>
            <person name="Cheuk R.F."/>
            <person name="Karlin-Newmann G."/>
            <person name="Liu S.X."/>
            <person name="Lam B."/>
            <person name="Sakano H."/>
            <person name="Wu T."/>
            <person name="Yu G."/>
            <person name="Miranda M."/>
            <person name="Quach H.L."/>
            <person name="Tripp M."/>
            <person name="Chang C.H."/>
            <person name="Lee J.M."/>
            <person name="Toriumi M.J."/>
            <person name="Chan M.M."/>
            <person name="Tang C.C."/>
            <person name="Onodera C.S."/>
            <person name="Deng J.M."/>
            <person name="Akiyama K."/>
            <person name="Ansari Y."/>
            <person name="Arakawa T."/>
            <person name="Banh J."/>
            <person name="Banno F."/>
            <person name="Bowser L."/>
            <person name="Brooks S.Y."/>
            <person name="Carninci P."/>
            <person name="Chao Q."/>
            <person name="Choy N."/>
            <person name="Enju A."/>
            <person name="Goldsmith A.D."/>
            <person name="Gurjal M."/>
            <person name="Hansen N.F."/>
            <person name="Hayashizaki Y."/>
            <person name="Johnson-Hopson C."/>
            <person name="Hsuan V.W."/>
            <person name="Iida K."/>
            <person name="Karnes M."/>
            <person name="Khan S."/>
            <person name="Koesema E."/>
            <person name="Ishida J."/>
            <person name="Jiang P.X."/>
            <person name="Jones T."/>
            <person name="Kawai J."/>
            <person name="Kamiya A."/>
            <person name="Meyers C."/>
            <person name="Nakajima M."/>
            <person name="Narusaka M."/>
            <person name="Seki M."/>
            <person name="Sakurai T."/>
            <person name="Satou M."/>
            <person name="Tamse R."/>
            <person name="Vaysberg M."/>
            <person name="Wallender E.K."/>
            <person name="Wong C."/>
            <person name="Yamamura Y."/>
            <person name="Yuan S."/>
            <person name="Shinozaki K."/>
            <person name="Davis R.W."/>
            <person name="Theologis A."/>
            <person name="Ecker J.R."/>
        </authorList>
    </citation>
    <scope>NUCLEOTIDE SEQUENCE [LARGE SCALE MRNA]</scope>
    <source>
        <strain>cv. Columbia</strain>
    </source>
</reference>
<reference key="4">
    <citation type="journal article" date="2002" name="Plant Physiol.">
        <title>An oligopeptide transporter gene family in Arabidopsis.</title>
        <authorList>
            <person name="Koh S."/>
            <person name="Wiles A.M."/>
            <person name="Sharp J.S."/>
            <person name="Naider F.R."/>
            <person name="Becker J.M."/>
            <person name="Stacey G."/>
        </authorList>
    </citation>
    <scope>FUNCTION</scope>
    <scope>NOMENCLATURE</scope>
    <scope>TISSUE SPECIFICITY</scope>
</reference>
<reference key="5">
    <citation type="journal article" date="2004" name="Plant Physiol.">
        <title>AtOPT6 transports glutathione derivatives and is induced by primisulfuron.</title>
        <authorList>
            <person name="Cagnac O."/>
            <person name="Bourbouloux A."/>
            <person name="Chakrabarty D."/>
            <person name="Zhang M.Y."/>
            <person name="Delrot S."/>
        </authorList>
    </citation>
    <scope>FUNCTION</scope>
    <scope>TISSUE SPECIFICITY</scope>
    <scope>DEVELOPMENTAL STAGE</scope>
    <scope>INDUCTION</scope>
</reference>
<protein>
    <recommendedName>
        <fullName>Oligopeptide transporter 6</fullName>
        <shortName>AtOPT6</shortName>
    </recommendedName>
</protein>
<sequence>MGEIATEFTPVMDDDDDRCVVPEVELTVPKTDDSTLPVLTFRMWVLGIGACIVLSFINQFFWYRTMPLSITGISAQIAVVPLGHLMARVLPTKRFLEGTRFQFTLNPGAFNVKEHVLITIFANSGAGSVYATHILSAIKLYYKRSLPFLPAFLVMITTQILGFGWAGLFRKHLVEPGEMWWPSNLVQVSLFGALHEKEKKSRGGMSRTQFFLIVLVASFAYYIFPGYLFTMLTSISWVCWLNPKSILVNQLGSGEHGLGIGSIGFDWVTISAYLGSPLASPLFASVNVAIGFVLVMYIVTPVCYWLNIYDAKTFPIFSSQLFMGNGSRYDVLSIIDSKFHLDRVVYSRTGSINMSTFFAVTYGLGFATLSATIVHVLVFNGSDLWKQTRGAFQKNKKMDIHTRIMKKNYREVPLWWFLVILLLNIALIMFISVHYNATVQLPWWGVLLACAIAISFTPLIGVIAATTNQAPGLNIITEYVIGYIYPERPVANMCFKVYGYISMTQALTFISDFKLGHYMKIPPRSMFMAQVAGTLVAVVVYTGTAWWLMEEIPHLCDTSLLPSDSQWTCPMDRVFFDASVIWGLVGPRRVFGDLGEYSNVNWFFLVGAIAPLLVWLATKMFPAQTWIAKIHIPVLVGATAMMPPATAVNFTSWLIVAFIFGHFIFKYRRVWWTKYNYVLSGGLDAGSAFMTILLFLALGRKGIEVQWWGNSGDRDTCPLASCPTAKGVVVKGCPVF</sequence>
<accession>Q9T095</accession>
<evidence type="ECO:0000255" key="1"/>
<evidence type="ECO:0000269" key="2">
    <source>
    </source>
</evidence>
<evidence type="ECO:0000269" key="3">
    <source>
    </source>
</evidence>
<evidence type="ECO:0000305" key="4"/>